<accession>P67307</accession>
<accession>P58128</accession>
<accession>Q490N8</accession>
<proteinExistence type="inferred from homology"/>
<gene>
    <name type="ordered locus">SPy_0370</name>
    <name type="ordered locus">M5005_Spy0311</name>
</gene>
<comment type="function">
    <text evidence="1">Could be involved in insertion of integral membrane proteins into the membrane.</text>
</comment>
<comment type="subcellular location">
    <subcellularLocation>
        <location evidence="1">Cell membrane</location>
        <topology evidence="1">Peripheral membrane protein</topology>
        <orientation evidence="1">Cytoplasmic side</orientation>
    </subcellularLocation>
</comment>
<comment type="similarity">
    <text evidence="1">Belongs to the UPF0161 family.</text>
</comment>
<comment type="sequence caution" evidence="2">
    <conflict type="erroneous initiation">
        <sequence resource="EMBL-CDS" id="AAZ50930"/>
    </conflict>
</comment>
<keyword id="KW-1003">Cell membrane</keyword>
<keyword id="KW-0472">Membrane</keyword>
<keyword id="KW-1185">Reference proteome</keyword>
<evidence type="ECO:0000255" key="1">
    <source>
        <dbReference type="HAMAP-Rule" id="MF_00386"/>
    </source>
</evidence>
<evidence type="ECO:0000305" key="2"/>
<reference key="1">
    <citation type="journal article" date="2001" name="Proc. Natl. Acad. Sci. U.S.A.">
        <title>Complete genome sequence of an M1 strain of Streptococcus pyogenes.</title>
        <authorList>
            <person name="Ferretti J.J."/>
            <person name="McShan W.M."/>
            <person name="Ajdic D.J."/>
            <person name="Savic D.J."/>
            <person name="Savic G."/>
            <person name="Lyon K."/>
            <person name="Primeaux C."/>
            <person name="Sezate S."/>
            <person name="Suvorov A.N."/>
            <person name="Kenton S."/>
            <person name="Lai H.S."/>
            <person name="Lin S.P."/>
            <person name="Qian Y."/>
            <person name="Jia H.G."/>
            <person name="Najar F.Z."/>
            <person name="Ren Q."/>
            <person name="Zhu H."/>
            <person name="Song L."/>
            <person name="White J."/>
            <person name="Yuan X."/>
            <person name="Clifton S.W."/>
            <person name="Roe B.A."/>
            <person name="McLaughlin R.E."/>
        </authorList>
    </citation>
    <scope>NUCLEOTIDE SEQUENCE [LARGE SCALE GENOMIC DNA]</scope>
    <source>
        <strain>ATCC 700294 / SF370 / Serotype M1</strain>
    </source>
</reference>
<reference key="2">
    <citation type="journal article" date="2005" name="J. Infect. Dis.">
        <title>Evolutionary origin and emergence of a highly successful clone of serotype M1 group A Streptococcus involved multiple horizontal gene transfer events.</title>
        <authorList>
            <person name="Sumby P."/>
            <person name="Porcella S.F."/>
            <person name="Madrigal A.G."/>
            <person name="Barbian K.D."/>
            <person name="Virtaneva K."/>
            <person name="Ricklefs S.M."/>
            <person name="Sturdevant D.E."/>
            <person name="Graham M.R."/>
            <person name="Vuopio-Varkila J."/>
            <person name="Hoe N.P."/>
            <person name="Musser J.M."/>
        </authorList>
    </citation>
    <scope>NUCLEOTIDE SEQUENCE [LARGE SCALE GENOMIC DNA]</scope>
    <source>
        <strain>ATCC BAA-947 / MGAS5005 / Serotype M1</strain>
    </source>
</reference>
<name>YIDD_STRP1</name>
<sequence length="86" mass="9511">MKKLLIVSVKAYQKYISPLSPPSCRYKPTCSAYMLTAIEKHGTKGILMGIARILRCHPFVAGGVDPVPEDFSLMRNKNTSKNAEKA</sequence>
<organism>
    <name type="scientific">Streptococcus pyogenes serotype M1</name>
    <dbReference type="NCBI Taxonomy" id="301447"/>
    <lineage>
        <taxon>Bacteria</taxon>
        <taxon>Bacillati</taxon>
        <taxon>Bacillota</taxon>
        <taxon>Bacilli</taxon>
        <taxon>Lactobacillales</taxon>
        <taxon>Streptococcaceae</taxon>
        <taxon>Streptococcus</taxon>
    </lineage>
</organism>
<dbReference type="EMBL" id="AE004092">
    <property type="protein sequence ID" value="AAK33414.1"/>
    <property type="molecule type" value="Genomic_DNA"/>
</dbReference>
<dbReference type="EMBL" id="CP000017">
    <property type="protein sequence ID" value="AAZ50930.1"/>
    <property type="status" value="ALT_INIT"/>
    <property type="molecule type" value="Genomic_DNA"/>
</dbReference>
<dbReference type="RefSeq" id="NP_268693.1">
    <property type="nucleotide sequence ID" value="NC_002737.2"/>
</dbReference>
<dbReference type="PaxDb" id="1314-HKU360_00347"/>
<dbReference type="KEGG" id="spy:SPy_0370"/>
<dbReference type="KEGG" id="spz:M5005_Spy0311"/>
<dbReference type="PATRIC" id="fig|160490.10.peg.320"/>
<dbReference type="HOGENOM" id="CLU_144811_5_2_9"/>
<dbReference type="OMA" id="FHPGGHD"/>
<dbReference type="Proteomes" id="UP000000750">
    <property type="component" value="Chromosome"/>
</dbReference>
<dbReference type="GO" id="GO:0005886">
    <property type="term" value="C:plasma membrane"/>
    <property type="evidence" value="ECO:0007669"/>
    <property type="project" value="UniProtKB-SubCell"/>
</dbReference>
<dbReference type="HAMAP" id="MF_00386">
    <property type="entry name" value="UPF0161_YidD"/>
    <property type="match status" value="1"/>
</dbReference>
<dbReference type="InterPro" id="IPR002696">
    <property type="entry name" value="Membr_insert_effic_factor_YidD"/>
</dbReference>
<dbReference type="NCBIfam" id="TIGR00278">
    <property type="entry name" value="membrane protein insertion efficiency factor YidD"/>
    <property type="match status" value="1"/>
</dbReference>
<dbReference type="PANTHER" id="PTHR33383">
    <property type="entry name" value="MEMBRANE PROTEIN INSERTION EFFICIENCY FACTOR-RELATED"/>
    <property type="match status" value="1"/>
</dbReference>
<dbReference type="PANTHER" id="PTHR33383:SF1">
    <property type="entry name" value="MEMBRANE PROTEIN INSERTION EFFICIENCY FACTOR-RELATED"/>
    <property type="match status" value="1"/>
</dbReference>
<dbReference type="Pfam" id="PF01809">
    <property type="entry name" value="YidD"/>
    <property type="match status" value="1"/>
</dbReference>
<dbReference type="SMART" id="SM01234">
    <property type="entry name" value="Haemolytic"/>
    <property type="match status" value="1"/>
</dbReference>
<feature type="chain" id="PRO_0000171883" description="Putative membrane protein insertion efficiency factor">
    <location>
        <begin position="1"/>
        <end position="86"/>
    </location>
</feature>
<protein>
    <recommendedName>
        <fullName evidence="1">Putative membrane protein insertion efficiency factor</fullName>
    </recommendedName>
</protein>